<feature type="chain" id="PRO_0000186206" description="U3 small nucleolar RNA-associated protein 10">
    <location>
        <begin position="1"/>
        <end position="1649"/>
    </location>
</feature>
<feature type="repeat" description="HEAT">
    <location>
        <begin position="1608"/>
        <end position="1646"/>
    </location>
</feature>
<dbReference type="EMBL" id="CU329671">
    <property type="protein sequence ID" value="CAA18872.1"/>
    <property type="molecule type" value="Genomic_DNA"/>
</dbReference>
<dbReference type="PIR" id="T39938">
    <property type="entry name" value="T39938"/>
</dbReference>
<dbReference type="RefSeq" id="NP_596604.1">
    <property type="nucleotide sequence ID" value="NM_001022525.2"/>
</dbReference>
<dbReference type="SMR" id="O60179"/>
<dbReference type="BioGRID" id="276815">
    <property type="interactions" value="6"/>
</dbReference>
<dbReference type="FunCoup" id="O60179">
    <property type="interactions" value="759"/>
</dbReference>
<dbReference type="STRING" id="284812.O60179"/>
<dbReference type="iPTMnet" id="O60179"/>
<dbReference type="PaxDb" id="4896-SPBC23E6.04c.1"/>
<dbReference type="EnsemblFungi" id="SPBC23E6.04c.1">
    <property type="protein sequence ID" value="SPBC23E6.04c.1:pep"/>
    <property type="gene ID" value="SPBC23E6.04c"/>
</dbReference>
<dbReference type="GeneID" id="2540284"/>
<dbReference type="KEGG" id="spo:2540284"/>
<dbReference type="PomBase" id="SPBC23E6.04c">
    <property type="gene designation" value="utp10"/>
</dbReference>
<dbReference type="VEuPathDB" id="FungiDB:SPBC23E6.04c"/>
<dbReference type="eggNOG" id="KOG1837">
    <property type="taxonomic scope" value="Eukaryota"/>
</dbReference>
<dbReference type="HOGENOM" id="CLU_001128_3_1_1"/>
<dbReference type="InParanoid" id="O60179"/>
<dbReference type="OMA" id="GEPFDRY"/>
<dbReference type="PhylomeDB" id="O60179"/>
<dbReference type="Reactome" id="R-SPO-6791226">
    <property type="pathway name" value="Major pathway of rRNA processing in the nucleolus and cytosol"/>
</dbReference>
<dbReference type="PRO" id="PR:O60179"/>
<dbReference type="Proteomes" id="UP000002485">
    <property type="component" value="Chromosome II"/>
</dbReference>
<dbReference type="GO" id="GO:0030686">
    <property type="term" value="C:90S preribosome"/>
    <property type="evidence" value="ECO:0000318"/>
    <property type="project" value="GO_Central"/>
</dbReference>
<dbReference type="GO" id="GO:0030688">
    <property type="term" value="C:preribosome, small subunit precursor"/>
    <property type="evidence" value="ECO:0000266"/>
    <property type="project" value="PomBase"/>
</dbReference>
<dbReference type="GO" id="GO:0032040">
    <property type="term" value="C:small-subunit processome"/>
    <property type="evidence" value="ECO:0000314"/>
    <property type="project" value="PomBase"/>
</dbReference>
<dbReference type="GO" id="GO:0034455">
    <property type="term" value="C:t-UTP complex"/>
    <property type="evidence" value="ECO:0000318"/>
    <property type="project" value="GO_Central"/>
</dbReference>
<dbReference type="GO" id="GO:0030515">
    <property type="term" value="F:snoRNA binding"/>
    <property type="evidence" value="ECO:0000318"/>
    <property type="project" value="GO_Central"/>
</dbReference>
<dbReference type="GO" id="GO:0000462">
    <property type="term" value="P:maturation of SSU-rRNA from tricistronic rRNA transcript (SSU-rRNA, 5.8S rRNA, LSU-rRNA)"/>
    <property type="evidence" value="ECO:0000318"/>
    <property type="project" value="GO_Central"/>
</dbReference>
<dbReference type="GO" id="GO:0045943">
    <property type="term" value="P:positive regulation of transcription by RNA polymerase I"/>
    <property type="evidence" value="ECO:0000318"/>
    <property type="project" value="GO_Central"/>
</dbReference>
<dbReference type="Gene3D" id="1.25.10.10">
    <property type="entry name" value="Leucine-rich Repeat Variant"/>
    <property type="match status" value="2"/>
</dbReference>
<dbReference type="InterPro" id="IPR011989">
    <property type="entry name" value="ARM-like"/>
</dbReference>
<dbReference type="InterPro" id="IPR016024">
    <property type="entry name" value="ARM-type_fold"/>
</dbReference>
<dbReference type="InterPro" id="IPR012954">
    <property type="entry name" value="BP28_C_dom"/>
</dbReference>
<dbReference type="InterPro" id="IPR021133">
    <property type="entry name" value="HEAT_type_2"/>
</dbReference>
<dbReference type="InterPro" id="IPR056473">
    <property type="entry name" value="HEAT_Utp10/HEAT1"/>
</dbReference>
<dbReference type="InterPro" id="IPR022125">
    <property type="entry name" value="U3snoRNP10_N"/>
</dbReference>
<dbReference type="InterPro" id="IPR040191">
    <property type="entry name" value="UTP10"/>
</dbReference>
<dbReference type="PANTHER" id="PTHR13457">
    <property type="entry name" value="BAP28"/>
    <property type="match status" value="1"/>
</dbReference>
<dbReference type="PANTHER" id="PTHR13457:SF1">
    <property type="entry name" value="HEAT REPEAT-CONTAINING PROTEIN 1"/>
    <property type="match status" value="1"/>
</dbReference>
<dbReference type="Pfam" id="PF08146">
    <property type="entry name" value="BP28CT"/>
    <property type="match status" value="1"/>
</dbReference>
<dbReference type="Pfam" id="PF23243">
    <property type="entry name" value="HEAT_HEATR1"/>
    <property type="match status" value="1"/>
</dbReference>
<dbReference type="Pfam" id="PF12397">
    <property type="entry name" value="U3snoRNP10"/>
    <property type="match status" value="1"/>
</dbReference>
<dbReference type="SMART" id="SM01036">
    <property type="entry name" value="BP28CT"/>
    <property type="match status" value="1"/>
</dbReference>
<dbReference type="SUPFAM" id="SSF48371">
    <property type="entry name" value="ARM repeat"/>
    <property type="match status" value="2"/>
</dbReference>
<dbReference type="PROSITE" id="PS50077">
    <property type="entry name" value="HEAT_REPEAT"/>
    <property type="match status" value="1"/>
</dbReference>
<evidence type="ECO:0000250" key="1"/>
<evidence type="ECO:0000305" key="2"/>
<comment type="function">
    <text evidence="1">Involved in nucleolar processing of pre-18S ribosomal RNA. Required for optimal pre-ribosomal RNA transcription by RNA polymerase I together with a subset of U3 proteins required for transcription (t-UTPs). Involved in ribosome biosynthesis (By similarity).</text>
</comment>
<comment type="subunit">
    <text evidence="1">Component of the ribosomal small subunit (SSU) processome.</text>
</comment>
<comment type="subcellular location">
    <subcellularLocation>
        <location evidence="1">Nucleus</location>
        <location evidence="1">Nucleolus</location>
    </subcellularLocation>
</comment>
<comment type="similarity">
    <text evidence="2">Belongs to the HEATR1/UTP10 family.</text>
</comment>
<proteinExistence type="inferred from homology"/>
<protein>
    <recommendedName>
        <fullName>U3 small nucleolar RNA-associated protein 10</fullName>
        <shortName>U3 snoRNA-associated protein 10</shortName>
    </recommendedName>
    <alternativeName>
        <fullName>U3 protein 10 required for transcription</fullName>
    </alternativeName>
</protein>
<name>UTP10_SCHPO</name>
<keyword id="KW-0539">Nucleus</keyword>
<keyword id="KW-1185">Reference proteome</keyword>
<keyword id="KW-0687">Ribonucleoprotein</keyword>
<keyword id="KW-0690">Ribosome biogenesis</keyword>
<keyword id="KW-0698">rRNA processing</keyword>
<keyword id="KW-0804">Transcription</keyword>
<sequence length="1649" mass="186412">MASSLQKQLKNIQSNNVLKINKIRRAPSLLYDPKVAADMDLEEIYVTAVSGFHELAVHEPRLLYFEKTLLGEQSVQVDRVLLNRTENEKIDLECVQILRLLAPFFTEKNALKVLEWLIRRFSIHEYVSDEFILSFLPFHDHPFFARILGCSKPKSRPLLFLENAIKMPVTLSRADIVHALSRDKEFFAMFAQFVQNTAESHNMYPELARFWAGTMMEVLVAWHSSNEDPNVLLDRFFLRVSYAVSYVSSIDFQIAGFMLLSSIAASLPLSPSIIPPLVSAITDRLSFDNIKPALICVGHLLQFCSSFEFDHEQLEKLESFGASSLLIELSQEHRLDEFFVSYWVSLIKSRKQKDKKRLISLLDTSISQIRVTHEQAKFLLSVIPVNQDFKALQSYRRILDSVIQPERKEGKLDNLINTLQDKKKSSTFSKKDREVLLKKISEIDSQTSFEQCLAYADSAADLDSSVFISLLSKFGDKIPFLLFCIANGSERIIILSLIELRKTIEENKDVDYQIILPVVLYSLQSKDTEVRSRALNLILTFLELRNENLEFSIIYGMDDNDNKNLRWLSPVETKYYCSDLLLDRSSEIGLDGTYLFSYIPERLFTEKKPKNASKEIAVTSFLSSHAACSKLSNVRVLLLEILTRVHGKVEDAKMQILLPRLEQLSEFNSEKFKTVSKREVEALVNCFNHTSFTSLLSFLSSNIVLSQAICRRIVEIQSHLKDPQRLEFVKAVISQDEQPHYYVDVLDSIKIPDTVFKKLIGSVRLVKEKNPAIAKRKRIDSHIFDGDVQRLTRILELLETKNAASYPKLASPLFEVLNSVIALKEDIVSSNYLLQLLLGLLYEMIGASPITELSPSIRIDTLVGCIRSTNNPQIQNKALLLVSALANAAPEAVLHGVMPIFTFMGSTVLSRDDAFSIHVIEQTVKTVISALIRLGKDFDSSLLVSCFVNAFPHIPQHRRLRLYRLVLQTIGSNRFLSVVLIQFAEKMLLAKSTNVVAIHDFCLTLVQSFSVADRIGSINQCSRFCLKSLEEQSNSDSNGKAVSLIKLDELPMDVDLATLGSLRVKVLELISLVSKAKNFAFDLAKIMENSVDSFVEIQAGLFESIKLLITLSQQSSNEMELGHVYVALRSVIHLLPNELFCTVLGKLLHDERALLRRKALSIVQQRVQQGSKVSALTALIPDVTYNISNYSDEETTQLAMDCLAVMAKRFSASPELFISPIEVVSGPYGLKNSARDVQVSAIVCITVLTNTLAARILPYLADIVNYSLSILDDARKDPEGDLLELACFSMMIDFFKVLPEFSSSYVEPTIKCALASDRAFEHDAIGELLFETIANFIPTRLLMKSIFAAWPECARLGSTAALRLLELIELALQNSSRSAIGTVYKSIFKFFLDSFDSRRSLLFAEDVDNVETQAVNVFLKFVMKLSDTTFRPLFLHLHSWALEDLYETDPSGIVSRQTFFYNFLTIFLDTLKSIVTNYYAYVLDDTIELLSSKDTNSEVRHLVNSSLVSAFENDTEEFWMVPARFGKISPVLIEQIQYAPLLDDKVLVKAIVELASVASSSDNFRSMNTQLLQYLRSSNINARLLAIQIQTQLYGRLGENWISTLPQSVPFIAELMEDDDDQVETATAELVRIIDDRLGENESLQDYLT</sequence>
<organism>
    <name type="scientific">Schizosaccharomyces pombe (strain 972 / ATCC 24843)</name>
    <name type="common">Fission yeast</name>
    <dbReference type="NCBI Taxonomy" id="284812"/>
    <lineage>
        <taxon>Eukaryota</taxon>
        <taxon>Fungi</taxon>
        <taxon>Dikarya</taxon>
        <taxon>Ascomycota</taxon>
        <taxon>Taphrinomycotina</taxon>
        <taxon>Schizosaccharomycetes</taxon>
        <taxon>Schizosaccharomycetales</taxon>
        <taxon>Schizosaccharomycetaceae</taxon>
        <taxon>Schizosaccharomyces</taxon>
    </lineage>
</organism>
<gene>
    <name type="primary">utp10</name>
    <name type="ORF">SPBC23E6.04c</name>
</gene>
<reference key="1">
    <citation type="journal article" date="2002" name="Nature">
        <title>The genome sequence of Schizosaccharomyces pombe.</title>
        <authorList>
            <person name="Wood V."/>
            <person name="Gwilliam R."/>
            <person name="Rajandream M.A."/>
            <person name="Lyne M.H."/>
            <person name="Lyne R."/>
            <person name="Stewart A."/>
            <person name="Sgouros J.G."/>
            <person name="Peat N."/>
            <person name="Hayles J."/>
            <person name="Baker S.G."/>
            <person name="Basham D."/>
            <person name="Bowman S."/>
            <person name="Brooks K."/>
            <person name="Brown D."/>
            <person name="Brown S."/>
            <person name="Chillingworth T."/>
            <person name="Churcher C.M."/>
            <person name="Collins M."/>
            <person name="Connor R."/>
            <person name="Cronin A."/>
            <person name="Davis P."/>
            <person name="Feltwell T."/>
            <person name="Fraser A."/>
            <person name="Gentles S."/>
            <person name="Goble A."/>
            <person name="Hamlin N."/>
            <person name="Harris D.E."/>
            <person name="Hidalgo J."/>
            <person name="Hodgson G."/>
            <person name="Holroyd S."/>
            <person name="Hornsby T."/>
            <person name="Howarth S."/>
            <person name="Huckle E.J."/>
            <person name="Hunt S."/>
            <person name="Jagels K."/>
            <person name="James K.D."/>
            <person name="Jones L."/>
            <person name="Jones M."/>
            <person name="Leather S."/>
            <person name="McDonald S."/>
            <person name="McLean J."/>
            <person name="Mooney P."/>
            <person name="Moule S."/>
            <person name="Mungall K.L."/>
            <person name="Murphy L.D."/>
            <person name="Niblett D."/>
            <person name="Odell C."/>
            <person name="Oliver K."/>
            <person name="O'Neil S."/>
            <person name="Pearson D."/>
            <person name="Quail M.A."/>
            <person name="Rabbinowitsch E."/>
            <person name="Rutherford K.M."/>
            <person name="Rutter S."/>
            <person name="Saunders D."/>
            <person name="Seeger K."/>
            <person name="Sharp S."/>
            <person name="Skelton J."/>
            <person name="Simmonds M.N."/>
            <person name="Squares R."/>
            <person name="Squares S."/>
            <person name="Stevens K."/>
            <person name="Taylor K."/>
            <person name="Taylor R.G."/>
            <person name="Tivey A."/>
            <person name="Walsh S.V."/>
            <person name="Warren T."/>
            <person name="Whitehead S."/>
            <person name="Woodward J.R."/>
            <person name="Volckaert G."/>
            <person name="Aert R."/>
            <person name="Robben J."/>
            <person name="Grymonprez B."/>
            <person name="Weltjens I."/>
            <person name="Vanstreels E."/>
            <person name="Rieger M."/>
            <person name="Schaefer M."/>
            <person name="Mueller-Auer S."/>
            <person name="Gabel C."/>
            <person name="Fuchs M."/>
            <person name="Duesterhoeft A."/>
            <person name="Fritzc C."/>
            <person name="Holzer E."/>
            <person name="Moestl D."/>
            <person name="Hilbert H."/>
            <person name="Borzym K."/>
            <person name="Langer I."/>
            <person name="Beck A."/>
            <person name="Lehrach H."/>
            <person name="Reinhardt R."/>
            <person name="Pohl T.M."/>
            <person name="Eger P."/>
            <person name="Zimmermann W."/>
            <person name="Wedler H."/>
            <person name="Wambutt R."/>
            <person name="Purnelle B."/>
            <person name="Goffeau A."/>
            <person name="Cadieu E."/>
            <person name="Dreano S."/>
            <person name="Gloux S."/>
            <person name="Lelaure V."/>
            <person name="Mottier S."/>
            <person name="Galibert F."/>
            <person name="Aves S.J."/>
            <person name="Xiang Z."/>
            <person name="Hunt C."/>
            <person name="Moore K."/>
            <person name="Hurst S.M."/>
            <person name="Lucas M."/>
            <person name="Rochet M."/>
            <person name="Gaillardin C."/>
            <person name="Tallada V.A."/>
            <person name="Garzon A."/>
            <person name="Thode G."/>
            <person name="Daga R.R."/>
            <person name="Cruzado L."/>
            <person name="Jimenez J."/>
            <person name="Sanchez M."/>
            <person name="del Rey F."/>
            <person name="Benito J."/>
            <person name="Dominguez A."/>
            <person name="Revuelta J.L."/>
            <person name="Moreno S."/>
            <person name="Armstrong J."/>
            <person name="Forsburg S.L."/>
            <person name="Cerutti L."/>
            <person name="Lowe T."/>
            <person name="McCombie W.R."/>
            <person name="Paulsen I."/>
            <person name="Potashkin J."/>
            <person name="Shpakovski G.V."/>
            <person name="Ussery D."/>
            <person name="Barrell B.G."/>
            <person name="Nurse P."/>
        </authorList>
    </citation>
    <scope>NUCLEOTIDE SEQUENCE [LARGE SCALE GENOMIC DNA]</scope>
    <source>
        <strain>972 / ATCC 24843</strain>
    </source>
</reference>
<accession>O60179</accession>